<name>RG1BB_DANRE</name>
<dbReference type="EMBL" id="BC078340">
    <property type="protein sequence ID" value="AAH78340.1"/>
    <property type="molecule type" value="mRNA"/>
</dbReference>
<dbReference type="RefSeq" id="NP_001003479.1">
    <property type="nucleotide sequence ID" value="NM_001003479.1"/>
</dbReference>
<dbReference type="SMR" id="Q6DBW1"/>
<dbReference type="FunCoup" id="Q6DBW1">
    <property type="interactions" value="86"/>
</dbReference>
<dbReference type="STRING" id="7955.ENSDARP00000064967"/>
<dbReference type="PaxDb" id="7955-ENSDARP00000064967"/>
<dbReference type="Ensembl" id="ENSDART00000064968">
    <property type="protein sequence ID" value="ENSDARP00000064967"/>
    <property type="gene ID" value="ENSDARG00000044251"/>
</dbReference>
<dbReference type="Ensembl" id="ENSDART00000182968">
    <property type="protein sequence ID" value="ENSDARP00000148041"/>
    <property type="gene ID" value="ENSDARG00000117029"/>
</dbReference>
<dbReference type="GeneID" id="445085"/>
<dbReference type="KEGG" id="dre:445085"/>
<dbReference type="AGR" id="ZFIN:ZDB-GENE-040801-220"/>
<dbReference type="CTD" id="445085"/>
<dbReference type="ZFIN" id="ZDB-GENE-040801-220">
    <property type="gene designation" value="rasgef1bb"/>
</dbReference>
<dbReference type="eggNOG" id="KOG3541">
    <property type="taxonomic scope" value="Eukaryota"/>
</dbReference>
<dbReference type="HOGENOM" id="CLU_022907_2_0_1"/>
<dbReference type="InParanoid" id="Q6DBW1"/>
<dbReference type="OMA" id="ANDCWHE"/>
<dbReference type="OrthoDB" id="20825at2759"/>
<dbReference type="PhylomeDB" id="Q6DBW1"/>
<dbReference type="TreeFam" id="TF313379"/>
<dbReference type="PRO" id="PR:Q6DBW1"/>
<dbReference type="Proteomes" id="UP000000437">
    <property type="component" value="Alternate scaffold 10"/>
</dbReference>
<dbReference type="Proteomes" id="UP000000437">
    <property type="component" value="Chromosome 10"/>
</dbReference>
<dbReference type="Bgee" id="ENSDARG00000044251">
    <property type="expression patterns" value="Expressed in heart and 24 other cell types or tissues"/>
</dbReference>
<dbReference type="GO" id="GO:0005886">
    <property type="term" value="C:plasma membrane"/>
    <property type="evidence" value="ECO:0000318"/>
    <property type="project" value="GO_Central"/>
</dbReference>
<dbReference type="GO" id="GO:0005085">
    <property type="term" value="F:guanyl-nucleotide exchange factor activity"/>
    <property type="evidence" value="ECO:0000250"/>
    <property type="project" value="UniProtKB"/>
</dbReference>
<dbReference type="GO" id="GO:0007265">
    <property type="term" value="P:Ras protein signal transduction"/>
    <property type="evidence" value="ECO:0000318"/>
    <property type="project" value="GO_Central"/>
</dbReference>
<dbReference type="CDD" id="cd00155">
    <property type="entry name" value="RasGEF"/>
    <property type="match status" value="1"/>
</dbReference>
<dbReference type="CDD" id="cd06224">
    <property type="entry name" value="REM"/>
    <property type="match status" value="1"/>
</dbReference>
<dbReference type="FunFam" id="1.10.840.10:FF:000008">
    <property type="entry name" value="Ras-GEF domain-containing family member 1B"/>
    <property type="match status" value="1"/>
</dbReference>
<dbReference type="FunFam" id="1.20.870.10:FF:000007">
    <property type="entry name" value="Ras-GEF domain-containing family member 1B"/>
    <property type="match status" value="1"/>
</dbReference>
<dbReference type="Gene3D" id="1.10.840.10">
    <property type="entry name" value="Ras guanine-nucleotide exchange factors catalytic domain"/>
    <property type="match status" value="1"/>
</dbReference>
<dbReference type="Gene3D" id="1.20.870.10">
    <property type="entry name" value="Son of sevenless (SoS) protein Chain: S domain 1"/>
    <property type="match status" value="1"/>
</dbReference>
<dbReference type="InterPro" id="IPR008937">
    <property type="entry name" value="Ras-like_GEF"/>
</dbReference>
<dbReference type="InterPro" id="IPR000651">
    <property type="entry name" value="Ras-like_Gua-exchang_fac_N"/>
</dbReference>
<dbReference type="InterPro" id="IPR019804">
    <property type="entry name" value="Ras_G-nucl-exch_fac_CS"/>
</dbReference>
<dbReference type="InterPro" id="IPR023578">
    <property type="entry name" value="Ras_GEF_dom_sf"/>
</dbReference>
<dbReference type="InterPro" id="IPR001895">
    <property type="entry name" value="RASGEF_cat_dom"/>
</dbReference>
<dbReference type="InterPro" id="IPR036964">
    <property type="entry name" value="RASGEF_cat_dom_sf"/>
</dbReference>
<dbReference type="PANTHER" id="PTHR23113">
    <property type="entry name" value="GUANINE NUCLEOTIDE EXCHANGE FACTOR"/>
    <property type="match status" value="1"/>
</dbReference>
<dbReference type="PANTHER" id="PTHR23113:SF197">
    <property type="entry name" value="RAS-GEF DOMAIN-CONTAINING FAMILY MEMBER 1B"/>
    <property type="match status" value="1"/>
</dbReference>
<dbReference type="Pfam" id="PF00617">
    <property type="entry name" value="RasGEF"/>
    <property type="match status" value="1"/>
</dbReference>
<dbReference type="Pfam" id="PF00618">
    <property type="entry name" value="RasGEF_N"/>
    <property type="match status" value="1"/>
</dbReference>
<dbReference type="SMART" id="SM00147">
    <property type="entry name" value="RasGEF"/>
    <property type="match status" value="1"/>
</dbReference>
<dbReference type="SUPFAM" id="SSF48366">
    <property type="entry name" value="Ras GEF"/>
    <property type="match status" value="1"/>
</dbReference>
<dbReference type="PROSITE" id="PS00720">
    <property type="entry name" value="RASGEF"/>
    <property type="match status" value="1"/>
</dbReference>
<dbReference type="PROSITE" id="PS50009">
    <property type="entry name" value="RASGEF_CAT"/>
    <property type="match status" value="1"/>
</dbReference>
<dbReference type="PROSITE" id="PS50212">
    <property type="entry name" value="RASGEF_NTER"/>
    <property type="match status" value="1"/>
</dbReference>
<feature type="chain" id="PRO_0000341486" description="Ras-GEF domain-containing family member 1B-B">
    <location>
        <begin position="1"/>
        <end position="475"/>
    </location>
</feature>
<feature type="domain" description="N-terminal Ras-GEF" evidence="2">
    <location>
        <begin position="36"/>
        <end position="166"/>
    </location>
</feature>
<feature type="domain" description="Ras-GEF" evidence="3">
    <location>
        <begin position="209"/>
        <end position="456"/>
    </location>
</feature>
<feature type="region of interest" description="Disordered" evidence="4">
    <location>
        <begin position="1"/>
        <end position="25"/>
    </location>
</feature>
<feature type="region of interest" description="Disordered" evidence="4">
    <location>
        <begin position="452"/>
        <end position="475"/>
    </location>
</feature>
<feature type="compositionally biased region" description="Polar residues" evidence="4">
    <location>
        <begin position="1"/>
        <end position="19"/>
    </location>
</feature>
<organism>
    <name type="scientific">Danio rerio</name>
    <name type="common">Zebrafish</name>
    <name type="synonym">Brachydanio rerio</name>
    <dbReference type="NCBI Taxonomy" id="7955"/>
    <lineage>
        <taxon>Eukaryota</taxon>
        <taxon>Metazoa</taxon>
        <taxon>Chordata</taxon>
        <taxon>Craniata</taxon>
        <taxon>Vertebrata</taxon>
        <taxon>Euteleostomi</taxon>
        <taxon>Actinopterygii</taxon>
        <taxon>Neopterygii</taxon>
        <taxon>Teleostei</taxon>
        <taxon>Ostariophysi</taxon>
        <taxon>Cypriniformes</taxon>
        <taxon>Danionidae</taxon>
        <taxon>Danioninae</taxon>
        <taxon>Danio</taxon>
    </lineage>
</organism>
<sequence length="475" mass="55441">MPQTTPYSSKFNPSAYSSSHSHRQPVEENYGGLHYRDNKLVSGSLEALIQLLVPTVDYYPDRSYIFTFLLSSRLFLNPFELMSRVCYLGVDHHRVGDPQMDKKRIRDIAPKIVQLLTEWTETFPYDFRDERMMRSLKEMTHRLAFGDELSRRAMQRLIQRLLRKLTTLGQYEESLATTSAAAAIDRPVALKSKQQLVRRDDCVLNLCDDPFIFAQQLTHIEMERLSYIGPEEFVRAFAQKRPSDNHKSFFSKRKASNLEAYVEWFNRLSYLTATEICMPVKKKHRARVLEFFIDVAQECFNIGNFNSLMAIITGMNMNPVSRLKKTWGKVNTDKFDILVHQMDPSSNFYSYRTALRGATQRSSTAHTSQEMIVIPFFSLFIKDIYFLNEGCANRLSNGHINFEKFWELAKQVSEFLSWRQVICPFERDRKTLQYLISAPVFSEDELQLASYESEGPENNLERDTRRSLRSSLSRM</sequence>
<reference evidence="8" key="1">
    <citation type="submission" date="2004-07" db="EMBL/GenBank/DDBJ databases">
        <authorList>
            <consortium name="NIH - Zebrafish Gene Collection (ZGC) project"/>
        </authorList>
    </citation>
    <scope>NUCLEOTIDE SEQUENCE [LARGE SCALE MRNA]</scope>
</reference>
<reference evidence="7" key="2">
    <citation type="journal article" date="2007" name="Gene Expr. Patterns">
        <title>Expression of rasgef1b in zebrafish.</title>
        <authorList>
            <person name="Epting D."/>
            <person name="Vorwerk S."/>
            <person name="Hageman A."/>
            <person name="Meyer D."/>
        </authorList>
    </citation>
    <scope>DEVELOPMENTAL STAGE</scope>
</reference>
<accession>Q6DBW1</accession>
<keyword id="KW-0344">Guanine-nucleotide releasing factor</keyword>
<keyword id="KW-1185">Reference proteome</keyword>
<gene>
    <name evidence="9" type="primary">rasgef1bb</name>
    <name evidence="6" type="synonym">rasgef</name>
    <name type="ORF">zgc:91814</name>
</gene>
<evidence type="ECO:0000250" key="1"/>
<evidence type="ECO:0000255" key="2">
    <source>
        <dbReference type="PROSITE-ProRule" id="PRU00135"/>
    </source>
</evidence>
<evidence type="ECO:0000255" key="3">
    <source>
        <dbReference type="PROSITE-ProRule" id="PRU00168"/>
    </source>
</evidence>
<evidence type="ECO:0000256" key="4">
    <source>
        <dbReference type="SAM" id="MobiDB-lite"/>
    </source>
</evidence>
<evidence type="ECO:0000269" key="5">
    <source>
    </source>
</evidence>
<evidence type="ECO:0000303" key="6">
    <source>
    </source>
</evidence>
<evidence type="ECO:0000305" key="7"/>
<evidence type="ECO:0000312" key="8">
    <source>
        <dbReference type="EMBL" id="AAH78340.1"/>
    </source>
</evidence>
<evidence type="ECO:0000312" key="9">
    <source>
        <dbReference type="ZFIN" id="ZDB-GENE-040801-220"/>
    </source>
</evidence>
<proteinExistence type="evidence at transcript level"/>
<protein>
    <recommendedName>
        <fullName>Ras-GEF domain-containing family member 1B-B</fullName>
    </recommendedName>
</protein>
<comment type="function">
    <text evidence="1">Guanine nucleotide exchange factor (GEF) for Ras family proteins.</text>
</comment>
<comment type="developmental stage">
    <text evidence="5">Expressed throughout embryogenesis from the blastula sphere stage (4 hours post fertilization).</text>
</comment>